<sequence length="248" mass="26833">MAADPIHQFQITKLFSLGHIGGQEIAFTNSSAYMFAAVAIIAVMMLAPGRQLVPGRFQSVAELSYEFVANMIRSTAGKEGLKFFPLVFSLFMFIAVSNLVGIIPYTFTVSSHLIVTVTLAMLVFVTVLVYGLAKNGLKFFKLFVPSGVPIYILPLVVFIEVISFFLKPVSHSVRLFANMLAGHIALKVFASFIAMLGALGVVGWVGAVLPLGLTIALTALELLVAFLQAYVFAILTCIYLNDAIHPGH</sequence>
<protein>
    <recommendedName>
        <fullName evidence="1">ATP synthase subunit a</fullName>
    </recommendedName>
    <alternativeName>
        <fullName evidence="1">ATP synthase F0 sector subunit a</fullName>
    </alternativeName>
    <alternativeName>
        <fullName evidence="1">F-ATPase subunit 6</fullName>
    </alternativeName>
</protein>
<gene>
    <name evidence="1" type="primary">atpB</name>
    <name type="ordered locus">RPB_4571</name>
</gene>
<keyword id="KW-0066">ATP synthesis</keyword>
<keyword id="KW-0997">Cell inner membrane</keyword>
<keyword id="KW-1003">Cell membrane</keyword>
<keyword id="KW-0138">CF(0)</keyword>
<keyword id="KW-0375">Hydrogen ion transport</keyword>
<keyword id="KW-0406">Ion transport</keyword>
<keyword id="KW-0472">Membrane</keyword>
<keyword id="KW-1185">Reference proteome</keyword>
<keyword id="KW-0812">Transmembrane</keyword>
<keyword id="KW-1133">Transmembrane helix</keyword>
<keyword id="KW-0813">Transport</keyword>
<evidence type="ECO:0000255" key="1">
    <source>
        <dbReference type="HAMAP-Rule" id="MF_01393"/>
    </source>
</evidence>
<dbReference type="EMBL" id="CP000250">
    <property type="protein sequence ID" value="ABD09254.1"/>
    <property type="molecule type" value="Genomic_DNA"/>
</dbReference>
<dbReference type="RefSeq" id="WP_011443437.1">
    <property type="nucleotide sequence ID" value="NC_007778.1"/>
</dbReference>
<dbReference type="SMR" id="Q2IRA6"/>
<dbReference type="STRING" id="316058.RPB_4571"/>
<dbReference type="KEGG" id="rpb:RPB_4571"/>
<dbReference type="eggNOG" id="COG0356">
    <property type="taxonomic scope" value="Bacteria"/>
</dbReference>
<dbReference type="HOGENOM" id="CLU_041018_0_2_5"/>
<dbReference type="OrthoDB" id="9809130at2"/>
<dbReference type="Proteomes" id="UP000008809">
    <property type="component" value="Chromosome"/>
</dbReference>
<dbReference type="GO" id="GO:0005886">
    <property type="term" value="C:plasma membrane"/>
    <property type="evidence" value="ECO:0007669"/>
    <property type="project" value="UniProtKB-SubCell"/>
</dbReference>
<dbReference type="GO" id="GO:0045259">
    <property type="term" value="C:proton-transporting ATP synthase complex"/>
    <property type="evidence" value="ECO:0007669"/>
    <property type="project" value="UniProtKB-KW"/>
</dbReference>
<dbReference type="GO" id="GO:0046933">
    <property type="term" value="F:proton-transporting ATP synthase activity, rotational mechanism"/>
    <property type="evidence" value="ECO:0007669"/>
    <property type="project" value="UniProtKB-UniRule"/>
</dbReference>
<dbReference type="CDD" id="cd00310">
    <property type="entry name" value="ATP-synt_Fo_a_6"/>
    <property type="match status" value="1"/>
</dbReference>
<dbReference type="FunFam" id="1.20.120.220:FF:000003">
    <property type="entry name" value="ATP synthase subunit a"/>
    <property type="match status" value="1"/>
</dbReference>
<dbReference type="Gene3D" id="1.20.120.220">
    <property type="entry name" value="ATP synthase, F0 complex, subunit A"/>
    <property type="match status" value="1"/>
</dbReference>
<dbReference type="HAMAP" id="MF_01393">
    <property type="entry name" value="ATP_synth_a_bact"/>
    <property type="match status" value="1"/>
</dbReference>
<dbReference type="InterPro" id="IPR000568">
    <property type="entry name" value="ATP_synth_F0_asu"/>
</dbReference>
<dbReference type="InterPro" id="IPR023011">
    <property type="entry name" value="ATP_synth_F0_asu_AS"/>
</dbReference>
<dbReference type="InterPro" id="IPR045083">
    <property type="entry name" value="ATP_synth_F0_asu_bact/mt"/>
</dbReference>
<dbReference type="InterPro" id="IPR035908">
    <property type="entry name" value="F0_ATP_A_sf"/>
</dbReference>
<dbReference type="NCBIfam" id="TIGR01131">
    <property type="entry name" value="ATP_synt_6_or_A"/>
    <property type="match status" value="1"/>
</dbReference>
<dbReference type="NCBIfam" id="NF004482">
    <property type="entry name" value="PRK05815.2-4"/>
    <property type="match status" value="1"/>
</dbReference>
<dbReference type="PANTHER" id="PTHR11410">
    <property type="entry name" value="ATP SYNTHASE SUBUNIT A"/>
    <property type="match status" value="1"/>
</dbReference>
<dbReference type="PANTHER" id="PTHR11410:SF0">
    <property type="entry name" value="ATP SYNTHASE SUBUNIT A"/>
    <property type="match status" value="1"/>
</dbReference>
<dbReference type="Pfam" id="PF00119">
    <property type="entry name" value="ATP-synt_A"/>
    <property type="match status" value="1"/>
</dbReference>
<dbReference type="PRINTS" id="PR00123">
    <property type="entry name" value="ATPASEA"/>
</dbReference>
<dbReference type="SUPFAM" id="SSF81336">
    <property type="entry name" value="F1F0 ATP synthase subunit A"/>
    <property type="match status" value="1"/>
</dbReference>
<dbReference type="PROSITE" id="PS00449">
    <property type="entry name" value="ATPASE_A"/>
    <property type="match status" value="1"/>
</dbReference>
<reference key="1">
    <citation type="submission" date="2006-01" db="EMBL/GenBank/DDBJ databases">
        <title>Complete sequence of Rhodopseudomonas palustris HaA2.</title>
        <authorList>
            <consortium name="US DOE Joint Genome Institute"/>
            <person name="Copeland A."/>
            <person name="Lucas S."/>
            <person name="Lapidus A."/>
            <person name="Barry K."/>
            <person name="Detter J.C."/>
            <person name="Glavina T."/>
            <person name="Hammon N."/>
            <person name="Israni S."/>
            <person name="Pitluck S."/>
            <person name="Chain P."/>
            <person name="Malfatti S."/>
            <person name="Shin M."/>
            <person name="Vergez L."/>
            <person name="Schmutz J."/>
            <person name="Larimer F."/>
            <person name="Land M."/>
            <person name="Hauser L."/>
            <person name="Pelletier D.A."/>
            <person name="Kyrpides N."/>
            <person name="Anderson I."/>
            <person name="Oda Y."/>
            <person name="Harwood C.S."/>
            <person name="Richardson P."/>
        </authorList>
    </citation>
    <scope>NUCLEOTIDE SEQUENCE [LARGE SCALE GENOMIC DNA]</scope>
    <source>
        <strain>HaA2</strain>
    </source>
</reference>
<name>ATP6_RHOP2</name>
<comment type="function">
    <text evidence="1">Key component of the proton channel; it plays a direct role in the translocation of protons across the membrane.</text>
</comment>
<comment type="subunit">
    <text evidence="1">F-type ATPases have 2 components, CF(1) - the catalytic core - and CF(0) - the membrane proton channel. CF(1) has five subunits: alpha(3), beta(3), gamma(1), delta(1), epsilon(1). CF(0) has four main subunits: a, b, b' and c.</text>
</comment>
<comment type="subcellular location">
    <subcellularLocation>
        <location evidence="1">Cell inner membrane</location>
        <topology evidence="1">Multi-pass membrane protein</topology>
    </subcellularLocation>
</comment>
<comment type="similarity">
    <text evidence="1">Belongs to the ATPase A chain family.</text>
</comment>
<feature type="chain" id="PRO_0000362420" description="ATP synthase subunit a">
    <location>
        <begin position="1"/>
        <end position="248"/>
    </location>
</feature>
<feature type="transmembrane region" description="Helical" evidence="1">
    <location>
        <begin position="25"/>
        <end position="45"/>
    </location>
</feature>
<feature type="transmembrane region" description="Helical" evidence="1">
    <location>
        <begin position="83"/>
        <end position="103"/>
    </location>
</feature>
<feature type="transmembrane region" description="Helical" evidence="1">
    <location>
        <begin position="113"/>
        <end position="133"/>
    </location>
</feature>
<feature type="transmembrane region" description="Helical" evidence="1">
    <location>
        <begin position="142"/>
        <end position="162"/>
    </location>
</feature>
<feature type="transmembrane region" description="Helical" evidence="1">
    <location>
        <begin position="192"/>
        <end position="212"/>
    </location>
</feature>
<feature type="transmembrane region" description="Helical" evidence="1">
    <location>
        <begin position="215"/>
        <end position="235"/>
    </location>
</feature>
<accession>Q2IRA6</accession>
<organism>
    <name type="scientific">Rhodopseudomonas palustris (strain HaA2)</name>
    <dbReference type="NCBI Taxonomy" id="316058"/>
    <lineage>
        <taxon>Bacteria</taxon>
        <taxon>Pseudomonadati</taxon>
        <taxon>Pseudomonadota</taxon>
        <taxon>Alphaproteobacteria</taxon>
        <taxon>Hyphomicrobiales</taxon>
        <taxon>Nitrobacteraceae</taxon>
        <taxon>Rhodopseudomonas</taxon>
    </lineage>
</organism>
<proteinExistence type="inferred from homology"/>